<keyword id="KW-0496">Mitochondrion</keyword>
<keyword id="KW-1185">Reference proteome</keyword>
<keyword id="KW-0809">Transit peptide</keyword>
<name>PT117_MOUSE</name>
<comment type="subcellular location">
    <subcellularLocation>
        <location evidence="2">Mitochondrion</location>
    </subcellularLocation>
</comment>
<comment type="similarity">
    <text evidence="2">Belongs to the PET117 family.</text>
</comment>
<gene>
    <name type="primary">Pet117</name>
    <name type="synonym">Gm20571</name>
</gene>
<proteinExistence type="inferred from homology"/>
<evidence type="ECO:0000255" key="1"/>
<evidence type="ECO:0000305" key="2"/>
<dbReference type="EMBL" id="AL808123">
    <property type="status" value="NOT_ANNOTATED_CDS"/>
    <property type="molecule type" value="Genomic_DNA"/>
</dbReference>
<dbReference type="CCDS" id="CCDS71155.1"/>
<dbReference type="RefSeq" id="NP_001158285.1">
    <property type="nucleotide sequence ID" value="NM_001164813.1"/>
</dbReference>
<dbReference type="FunCoup" id="P0DJF2">
    <property type="interactions" value="687"/>
</dbReference>
<dbReference type="STRING" id="10090.ENSMUSP00000139043"/>
<dbReference type="iPTMnet" id="P0DJF2"/>
<dbReference type="PhosphoSitePlus" id="P0DJF2"/>
<dbReference type="PaxDb" id="10090-ENSMUSP00000139043"/>
<dbReference type="PeptideAtlas" id="P0DJF2"/>
<dbReference type="ProteomicsDB" id="291610"/>
<dbReference type="Pumba" id="P0DJF2"/>
<dbReference type="Antibodypedia" id="62804">
    <property type="antibodies" value="12 antibodies from 9 providers"/>
</dbReference>
<dbReference type="Ensembl" id="ENSMUST00000183618.3">
    <property type="protein sequence ID" value="ENSMUSP00000139043.2"/>
    <property type="gene ID" value="ENSMUSG00000098387.3"/>
</dbReference>
<dbReference type="GeneID" id="100048644"/>
<dbReference type="KEGG" id="mmu:100048644"/>
<dbReference type="AGR" id="MGI:5295678"/>
<dbReference type="CTD" id="100303755"/>
<dbReference type="MGI" id="MGI:5295678">
    <property type="gene designation" value="Pet117"/>
</dbReference>
<dbReference type="VEuPathDB" id="HostDB:ENSMUSG00000098387"/>
<dbReference type="eggNOG" id="ENOG502S7B1">
    <property type="taxonomic scope" value="Eukaryota"/>
</dbReference>
<dbReference type="GeneTree" id="ENSGT00520000059926"/>
<dbReference type="HOGENOM" id="CLU_161486_2_0_1"/>
<dbReference type="InParanoid" id="P0DJF2"/>
<dbReference type="OMA" id="WDRERLH"/>
<dbReference type="OrthoDB" id="76305at2759"/>
<dbReference type="PhylomeDB" id="P0DJF2"/>
<dbReference type="BioGRID-ORCS" id="100048644">
    <property type="hits" value="6 hits in 39 CRISPR screens"/>
</dbReference>
<dbReference type="PRO" id="PR:P0DJF2"/>
<dbReference type="Proteomes" id="UP000000589">
    <property type="component" value="Chromosome 2"/>
</dbReference>
<dbReference type="RNAct" id="P0DJF2">
    <property type="molecule type" value="protein"/>
</dbReference>
<dbReference type="Bgee" id="ENSMUSG00000098387">
    <property type="expression patterns" value="Expressed in embryonic brain and 43 other cell types or tissues"/>
</dbReference>
<dbReference type="GO" id="GO:0005739">
    <property type="term" value="C:mitochondrion"/>
    <property type="evidence" value="ECO:0000250"/>
    <property type="project" value="UniProtKB"/>
</dbReference>
<dbReference type="InterPro" id="IPR031568">
    <property type="entry name" value="Pet117"/>
</dbReference>
<dbReference type="PANTHER" id="PTHR28163">
    <property type="entry name" value="PROTEIN PET117 HOMOLOG, MITOCHONDRIAL"/>
    <property type="match status" value="1"/>
</dbReference>
<dbReference type="PANTHER" id="PTHR28163:SF1">
    <property type="entry name" value="PROTEIN PET117 HOMOLOG, MITOCHONDRIAL"/>
    <property type="match status" value="1"/>
</dbReference>
<dbReference type="Pfam" id="PF15786">
    <property type="entry name" value="PET117"/>
    <property type="match status" value="1"/>
</dbReference>
<accession>P0DJF2</accession>
<feature type="transit peptide" description="Mitochondrion" evidence="1">
    <location>
        <begin position="1"/>
        <end position="22"/>
    </location>
</feature>
<feature type="chain" id="PRO_0000416097" description="Protein PET117 homolog, mitochondrial">
    <location>
        <begin position="23"/>
        <end position="80"/>
    </location>
</feature>
<protein>
    <recommendedName>
        <fullName>Protein PET117 homolog, mitochondrial</fullName>
    </recommendedName>
</protein>
<sequence length="80" mass="9124">MSRSSKAVLGLSVLLTAATVAGVHLKQRQDRQRLRDGVIRDIERQNQKKENIRLLGEQIILTKQLEAEREKMLEKGSQNT</sequence>
<organism>
    <name type="scientific">Mus musculus</name>
    <name type="common">Mouse</name>
    <dbReference type="NCBI Taxonomy" id="10090"/>
    <lineage>
        <taxon>Eukaryota</taxon>
        <taxon>Metazoa</taxon>
        <taxon>Chordata</taxon>
        <taxon>Craniata</taxon>
        <taxon>Vertebrata</taxon>
        <taxon>Euteleostomi</taxon>
        <taxon>Mammalia</taxon>
        <taxon>Eutheria</taxon>
        <taxon>Euarchontoglires</taxon>
        <taxon>Glires</taxon>
        <taxon>Rodentia</taxon>
        <taxon>Myomorpha</taxon>
        <taxon>Muroidea</taxon>
        <taxon>Muridae</taxon>
        <taxon>Murinae</taxon>
        <taxon>Mus</taxon>
        <taxon>Mus</taxon>
    </lineage>
</organism>
<reference key="1">
    <citation type="journal article" date="2009" name="PLoS Biol.">
        <title>Lineage-specific biology revealed by a finished genome assembly of the mouse.</title>
        <authorList>
            <person name="Church D.M."/>
            <person name="Goodstadt L."/>
            <person name="Hillier L.W."/>
            <person name="Zody M.C."/>
            <person name="Goldstein S."/>
            <person name="She X."/>
            <person name="Bult C.J."/>
            <person name="Agarwala R."/>
            <person name="Cherry J.L."/>
            <person name="DiCuccio M."/>
            <person name="Hlavina W."/>
            <person name="Kapustin Y."/>
            <person name="Meric P."/>
            <person name="Maglott D."/>
            <person name="Birtle Z."/>
            <person name="Marques A.C."/>
            <person name="Graves T."/>
            <person name="Zhou S."/>
            <person name="Teague B."/>
            <person name="Potamousis K."/>
            <person name="Churas C."/>
            <person name="Place M."/>
            <person name="Herschleb J."/>
            <person name="Runnheim R."/>
            <person name="Forrest D."/>
            <person name="Amos-Landgraf J."/>
            <person name="Schwartz D.C."/>
            <person name="Cheng Z."/>
            <person name="Lindblad-Toh K."/>
            <person name="Eichler E.E."/>
            <person name="Ponting C.P."/>
        </authorList>
    </citation>
    <scope>NUCLEOTIDE SEQUENCE [LARGE SCALE GENOMIC DNA]</scope>
    <source>
        <strain>C57BL/6J</strain>
    </source>
</reference>